<evidence type="ECO:0000255" key="1">
    <source>
        <dbReference type="HAMAP-Rule" id="MF_00362"/>
    </source>
</evidence>
<evidence type="ECO:0000305" key="2"/>
<proteinExistence type="inferred from homology"/>
<sequence length="162" mass="18055">MSAKINSKKLEMFDLLKKFIDNKQNLFFLDYRGLSVSQLTDLRNKIEGEHGALKVVKNNIMKMVLKEKNINIVDSCLVGPTVVVTALEEANVIAKIFYDFVKSSTLKVKGGFVLGEFYDEAKVQAYSKLPTKKESISLLASVLKAPVSKLARTLKALADIKN</sequence>
<organism>
    <name type="scientific">Borrelia garinii subsp. bavariensis (strain ATCC BAA-2496 / DSM 23469 / PBi)</name>
    <name type="common">Borreliella bavariensis</name>
    <dbReference type="NCBI Taxonomy" id="290434"/>
    <lineage>
        <taxon>Bacteria</taxon>
        <taxon>Pseudomonadati</taxon>
        <taxon>Spirochaetota</taxon>
        <taxon>Spirochaetia</taxon>
        <taxon>Spirochaetales</taxon>
        <taxon>Borreliaceae</taxon>
        <taxon>Borreliella</taxon>
    </lineage>
</organism>
<gene>
    <name evidence="1" type="primary">rplJ</name>
    <name type="ordered locus">BG0392</name>
</gene>
<dbReference type="EMBL" id="CP000013">
    <property type="protein sequence ID" value="AAU07244.1"/>
    <property type="molecule type" value="Genomic_DNA"/>
</dbReference>
<dbReference type="RefSeq" id="WP_011193717.1">
    <property type="nucleotide sequence ID" value="NZ_CP028872.1"/>
</dbReference>
<dbReference type="SMR" id="Q661M7"/>
<dbReference type="GeneID" id="45161179"/>
<dbReference type="KEGG" id="bga:BG0392"/>
<dbReference type="eggNOG" id="COG0244">
    <property type="taxonomic scope" value="Bacteria"/>
</dbReference>
<dbReference type="HOGENOM" id="CLU_092227_1_2_12"/>
<dbReference type="OrthoDB" id="9808307at2"/>
<dbReference type="Proteomes" id="UP000002276">
    <property type="component" value="Chromosome"/>
</dbReference>
<dbReference type="GO" id="GO:0015934">
    <property type="term" value="C:large ribosomal subunit"/>
    <property type="evidence" value="ECO:0007669"/>
    <property type="project" value="InterPro"/>
</dbReference>
<dbReference type="GO" id="GO:0070180">
    <property type="term" value="F:large ribosomal subunit rRNA binding"/>
    <property type="evidence" value="ECO:0007669"/>
    <property type="project" value="UniProtKB-UniRule"/>
</dbReference>
<dbReference type="GO" id="GO:0003735">
    <property type="term" value="F:structural constituent of ribosome"/>
    <property type="evidence" value="ECO:0007669"/>
    <property type="project" value="InterPro"/>
</dbReference>
<dbReference type="GO" id="GO:0006412">
    <property type="term" value="P:translation"/>
    <property type="evidence" value="ECO:0007669"/>
    <property type="project" value="UniProtKB-UniRule"/>
</dbReference>
<dbReference type="CDD" id="cd05797">
    <property type="entry name" value="Ribosomal_L10"/>
    <property type="match status" value="1"/>
</dbReference>
<dbReference type="FunFam" id="3.30.70.1730:FF:000028">
    <property type="entry name" value="50S ribosomal protein L10"/>
    <property type="match status" value="1"/>
</dbReference>
<dbReference type="Gene3D" id="3.30.70.1730">
    <property type="match status" value="1"/>
</dbReference>
<dbReference type="Gene3D" id="6.10.250.2350">
    <property type="match status" value="1"/>
</dbReference>
<dbReference type="HAMAP" id="MF_00362">
    <property type="entry name" value="Ribosomal_uL10"/>
    <property type="match status" value="1"/>
</dbReference>
<dbReference type="InterPro" id="IPR001790">
    <property type="entry name" value="Ribosomal_uL10"/>
</dbReference>
<dbReference type="InterPro" id="IPR043141">
    <property type="entry name" value="Ribosomal_uL10-like_sf"/>
</dbReference>
<dbReference type="InterPro" id="IPR022973">
    <property type="entry name" value="Ribosomal_uL10_bac"/>
</dbReference>
<dbReference type="InterPro" id="IPR047865">
    <property type="entry name" value="Ribosomal_uL10_bac_type"/>
</dbReference>
<dbReference type="InterPro" id="IPR002363">
    <property type="entry name" value="Ribosomal_uL10_CS_bac"/>
</dbReference>
<dbReference type="NCBIfam" id="NF000955">
    <property type="entry name" value="PRK00099.1-1"/>
    <property type="match status" value="1"/>
</dbReference>
<dbReference type="PANTHER" id="PTHR11560">
    <property type="entry name" value="39S RIBOSOMAL PROTEIN L10, MITOCHONDRIAL"/>
    <property type="match status" value="1"/>
</dbReference>
<dbReference type="Pfam" id="PF00466">
    <property type="entry name" value="Ribosomal_L10"/>
    <property type="match status" value="1"/>
</dbReference>
<dbReference type="SUPFAM" id="SSF160369">
    <property type="entry name" value="Ribosomal protein L10-like"/>
    <property type="match status" value="1"/>
</dbReference>
<dbReference type="PROSITE" id="PS01109">
    <property type="entry name" value="RIBOSOMAL_L10"/>
    <property type="match status" value="1"/>
</dbReference>
<name>RL10_BORGP</name>
<feature type="chain" id="PRO_0000154595" description="Large ribosomal subunit protein uL10">
    <location>
        <begin position="1"/>
        <end position="162"/>
    </location>
</feature>
<reference key="1">
    <citation type="journal article" date="2004" name="Nucleic Acids Res.">
        <title>Comparative analysis of the Borrelia garinii genome.</title>
        <authorList>
            <person name="Gloeckner G."/>
            <person name="Lehmann R."/>
            <person name="Romualdi A."/>
            <person name="Pradella S."/>
            <person name="Schulte-Spechtel U."/>
            <person name="Schilhabel M."/>
            <person name="Wilske B."/>
            <person name="Suehnel J."/>
            <person name="Platzer M."/>
        </authorList>
    </citation>
    <scope>NUCLEOTIDE SEQUENCE [LARGE SCALE GENOMIC DNA]</scope>
    <source>
        <strain>ATCC BAA-2496 / DSM 23469 / PBi</strain>
    </source>
</reference>
<accession>Q661M7</accession>
<protein>
    <recommendedName>
        <fullName evidence="1">Large ribosomal subunit protein uL10</fullName>
    </recommendedName>
    <alternativeName>
        <fullName evidence="2">50S ribosomal protein L10</fullName>
    </alternativeName>
</protein>
<keyword id="KW-0687">Ribonucleoprotein</keyword>
<keyword id="KW-0689">Ribosomal protein</keyword>
<keyword id="KW-0694">RNA-binding</keyword>
<keyword id="KW-0699">rRNA-binding</keyword>
<comment type="function">
    <text evidence="1">Forms part of the ribosomal stalk, playing a central role in the interaction of the ribosome with GTP-bound translation factors.</text>
</comment>
<comment type="subunit">
    <text evidence="1">Part of the ribosomal stalk of the 50S ribosomal subunit. The N-terminus interacts with L11 and the large rRNA to form the base of the stalk. The C-terminus forms an elongated spine to which L12 dimers bind in a sequential fashion forming a multimeric L10(L12)X complex.</text>
</comment>
<comment type="similarity">
    <text evidence="1">Belongs to the universal ribosomal protein uL10 family.</text>
</comment>